<keyword id="KW-0963">Cytoplasm</keyword>
<keyword id="KW-0489">Methyltransferase</keyword>
<keyword id="KW-1185">Reference proteome</keyword>
<keyword id="KW-0694">RNA-binding</keyword>
<keyword id="KW-0698">rRNA processing</keyword>
<keyword id="KW-0949">S-adenosyl-L-methionine</keyword>
<keyword id="KW-0808">Transferase</keyword>
<reference key="1">
    <citation type="journal article" date="2007" name="Nat. Biotechnol.">
        <title>Genome sequence and identification of candidate vaccine antigens from the animal pathogen Dichelobacter nodosus.</title>
        <authorList>
            <person name="Myers G.S.A."/>
            <person name="Parker D."/>
            <person name="Al-Hasani K."/>
            <person name="Kennan R.M."/>
            <person name="Seemann T."/>
            <person name="Ren Q."/>
            <person name="Badger J.H."/>
            <person name="Selengut J.D."/>
            <person name="Deboy R.T."/>
            <person name="Tettelin H."/>
            <person name="Boyce J.D."/>
            <person name="McCarl V.P."/>
            <person name="Han X."/>
            <person name="Nelson W.C."/>
            <person name="Madupu R."/>
            <person name="Mohamoud Y."/>
            <person name="Holley T."/>
            <person name="Fedorova N."/>
            <person name="Khouri H."/>
            <person name="Bottomley S.P."/>
            <person name="Whittington R.J."/>
            <person name="Adler B."/>
            <person name="Songer J.G."/>
            <person name="Rood J.I."/>
            <person name="Paulsen I.T."/>
        </authorList>
    </citation>
    <scope>NUCLEOTIDE SEQUENCE [LARGE SCALE GENOMIC DNA]</scope>
    <source>
        <strain>VCS1703A</strain>
    </source>
</reference>
<protein>
    <recommendedName>
        <fullName evidence="1">Ribosomal RNA small subunit methyltransferase A</fullName>
        <ecNumber evidence="1">2.1.1.182</ecNumber>
    </recommendedName>
    <alternativeName>
        <fullName evidence="1">16S rRNA (adenine(1518)-N(6)/adenine(1519)-N(6))-dimethyltransferase</fullName>
    </alternativeName>
    <alternativeName>
        <fullName evidence="1">16S rRNA dimethyladenosine transferase</fullName>
    </alternativeName>
    <alternativeName>
        <fullName evidence="1">16S rRNA dimethylase</fullName>
    </alternativeName>
    <alternativeName>
        <fullName evidence="1">S-adenosylmethionine-6-N', N'-adenosyl(rRNA) dimethyltransferase</fullName>
    </alternativeName>
</protein>
<organism>
    <name type="scientific">Dichelobacter nodosus (strain VCS1703A)</name>
    <dbReference type="NCBI Taxonomy" id="246195"/>
    <lineage>
        <taxon>Bacteria</taxon>
        <taxon>Pseudomonadati</taxon>
        <taxon>Pseudomonadota</taxon>
        <taxon>Gammaproteobacteria</taxon>
        <taxon>Cardiobacteriales</taxon>
        <taxon>Cardiobacteriaceae</taxon>
        <taxon>Dichelobacter</taxon>
    </lineage>
</organism>
<gene>
    <name evidence="1" type="primary">rsmA</name>
    <name evidence="1" type="synonym">ksgA</name>
    <name type="ordered locus">DNO_0922</name>
</gene>
<comment type="function">
    <text evidence="1">Specifically dimethylates two adjacent adenosines (A1518 and A1519) in the loop of a conserved hairpin near the 3'-end of 16S rRNA in the 30S particle. May play a critical role in biogenesis of 30S subunits.</text>
</comment>
<comment type="catalytic activity">
    <reaction evidence="1">
        <text>adenosine(1518)/adenosine(1519) in 16S rRNA + 4 S-adenosyl-L-methionine = N(6)-dimethyladenosine(1518)/N(6)-dimethyladenosine(1519) in 16S rRNA + 4 S-adenosyl-L-homocysteine + 4 H(+)</text>
        <dbReference type="Rhea" id="RHEA:19609"/>
        <dbReference type="Rhea" id="RHEA-COMP:10232"/>
        <dbReference type="Rhea" id="RHEA-COMP:10233"/>
        <dbReference type="ChEBI" id="CHEBI:15378"/>
        <dbReference type="ChEBI" id="CHEBI:57856"/>
        <dbReference type="ChEBI" id="CHEBI:59789"/>
        <dbReference type="ChEBI" id="CHEBI:74411"/>
        <dbReference type="ChEBI" id="CHEBI:74493"/>
        <dbReference type="EC" id="2.1.1.182"/>
    </reaction>
</comment>
<comment type="subcellular location">
    <subcellularLocation>
        <location evidence="1">Cytoplasm</location>
    </subcellularLocation>
</comment>
<comment type="similarity">
    <text evidence="1">Belongs to the class I-like SAM-binding methyltransferase superfamily. rRNA adenine N(6)-methyltransferase family. RsmA subfamily.</text>
</comment>
<accession>A5EY68</accession>
<feature type="chain" id="PRO_1000130268" description="Ribosomal RNA small subunit methyltransferase A">
    <location>
        <begin position="1"/>
        <end position="263"/>
    </location>
</feature>
<feature type="binding site" evidence="1">
    <location>
        <position position="13"/>
    </location>
    <ligand>
        <name>S-adenosyl-L-methionine</name>
        <dbReference type="ChEBI" id="CHEBI:59789"/>
    </ligand>
</feature>
<feature type="binding site" evidence="1">
    <location>
        <position position="15"/>
    </location>
    <ligand>
        <name>S-adenosyl-L-methionine</name>
        <dbReference type="ChEBI" id="CHEBI:59789"/>
    </ligand>
</feature>
<feature type="binding site" evidence="1">
    <location>
        <position position="40"/>
    </location>
    <ligand>
        <name>S-adenosyl-L-methionine</name>
        <dbReference type="ChEBI" id="CHEBI:59789"/>
    </ligand>
</feature>
<feature type="binding site" evidence="1">
    <location>
        <position position="61"/>
    </location>
    <ligand>
        <name>S-adenosyl-L-methionine</name>
        <dbReference type="ChEBI" id="CHEBI:59789"/>
    </ligand>
</feature>
<feature type="binding site" evidence="1">
    <location>
        <position position="86"/>
    </location>
    <ligand>
        <name>S-adenosyl-L-methionine</name>
        <dbReference type="ChEBI" id="CHEBI:59789"/>
    </ligand>
</feature>
<feature type="binding site" evidence="1">
    <location>
        <position position="105"/>
    </location>
    <ligand>
        <name>S-adenosyl-L-methionine</name>
        <dbReference type="ChEBI" id="CHEBI:59789"/>
    </ligand>
</feature>
<proteinExistence type="inferred from homology"/>
<dbReference type="EC" id="2.1.1.182" evidence="1"/>
<dbReference type="EMBL" id="CP000513">
    <property type="protein sequence ID" value="ABQ13804.1"/>
    <property type="molecule type" value="Genomic_DNA"/>
</dbReference>
<dbReference type="SMR" id="A5EY68"/>
<dbReference type="STRING" id="246195.DNO_0922"/>
<dbReference type="KEGG" id="dno:DNO_0922"/>
<dbReference type="eggNOG" id="COG0030">
    <property type="taxonomic scope" value="Bacteria"/>
</dbReference>
<dbReference type="HOGENOM" id="CLU_041220_0_1_6"/>
<dbReference type="Proteomes" id="UP000000248">
    <property type="component" value="Chromosome"/>
</dbReference>
<dbReference type="GO" id="GO:0005829">
    <property type="term" value="C:cytosol"/>
    <property type="evidence" value="ECO:0007669"/>
    <property type="project" value="TreeGrafter"/>
</dbReference>
<dbReference type="GO" id="GO:0052908">
    <property type="term" value="F:16S rRNA (adenine(1518)-N(6)/adenine(1519)-N(6))-dimethyltransferase activity"/>
    <property type="evidence" value="ECO:0007669"/>
    <property type="project" value="UniProtKB-EC"/>
</dbReference>
<dbReference type="GO" id="GO:0003723">
    <property type="term" value="F:RNA binding"/>
    <property type="evidence" value="ECO:0007669"/>
    <property type="project" value="UniProtKB-KW"/>
</dbReference>
<dbReference type="CDD" id="cd02440">
    <property type="entry name" value="AdoMet_MTases"/>
    <property type="match status" value="1"/>
</dbReference>
<dbReference type="FunFam" id="1.10.8.100:FF:000001">
    <property type="entry name" value="Ribosomal RNA small subunit methyltransferase A"/>
    <property type="match status" value="1"/>
</dbReference>
<dbReference type="Gene3D" id="1.10.8.100">
    <property type="entry name" value="Ribosomal RNA adenine dimethylase-like, domain 2"/>
    <property type="match status" value="1"/>
</dbReference>
<dbReference type="Gene3D" id="3.40.50.150">
    <property type="entry name" value="Vaccinia Virus protein VP39"/>
    <property type="match status" value="1"/>
</dbReference>
<dbReference type="HAMAP" id="MF_00607">
    <property type="entry name" value="16SrRNA_methyltr_A"/>
    <property type="match status" value="1"/>
</dbReference>
<dbReference type="InterPro" id="IPR001737">
    <property type="entry name" value="KsgA/Erm"/>
</dbReference>
<dbReference type="InterPro" id="IPR023165">
    <property type="entry name" value="rRNA_Ade_diMease-like_C"/>
</dbReference>
<dbReference type="InterPro" id="IPR020596">
    <property type="entry name" value="rRNA_Ade_Mease_Trfase_CS"/>
</dbReference>
<dbReference type="InterPro" id="IPR020598">
    <property type="entry name" value="rRNA_Ade_methylase_Trfase_N"/>
</dbReference>
<dbReference type="InterPro" id="IPR011530">
    <property type="entry name" value="rRNA_adenine_dimethylase"/>
</dbReference>
<dbReference type="InterPro" id="IPR029063">
    <property type="entry name" value="SAM-dependent_MTases_sf"/>
</dbReference>
<dbReference type="NCBIfam" id="TIGR00755">
    <property type="entry name" value="ksgA"/>
    <property type="match status" value="1"/>
</dbReference>
<dbReference type="PANTHER" id="PTHR11727">
    <property type="entry name" value="DIMETHYLADENOSINE TRANSFERASE"/>
    <property type="match status" value="1"/>
</dbReference>
<dbReference type="PANTHER" id="PTHR11727:SF7">
    <property type="entry name" value="DIMETHYLADENOSINE TRANSFERASE-RELATED"/>
    <property type="match status" value="1"/>
</dbReference>
<dbReference type="Pfam" id="PF00398">
    <property type="entry name" value="RrnaAD"/>
    <property type="match status" value="1"/>
</dbReference>
<dbReference type="SMART" id="SM00650">
    <property type="entry name" value="rADc"/>
    <property type="match status" value="1"/>
</dbReference>
<dbReference type="SUPFAM" id="SSF53335">
    <property type="entry name" value="S-adenosyl-L-methionine-dependent methyltransferases"/>
    <property type="match status" value="1"/>
</dbReference>
<dbReference type="PROSITE" id="PS01131">
    <property type="entry name" value="RRNA_A_DIMETH"/>
    <property type="match status" value="1"/>
</dbReference>
<dbReference type="PROSITE" id="PS51689">
    <property type="entry name" value="SAM_RNA_A_N6_MT"/>
    <property type="match status" value="1"/>
</dbReference>
<name>RSMA_DICNV</name>
<sequence>MTEIKAVKRLGQHFLRDEGIITQLLAAIDPKPQQKILEIGPGLGALTLPVLERCHELYAVELDHRVLQPLSEKAAAVGILHLIERDILNIHFAEVAPAPIRIIGNLPYNLSSPILFHCVAQRSDIVDMHFMLQKEVVDRITAPVDTPAYGRLSVMIQLYCQVEALFDVPPEAFAPPPKVNSAVVRLIPQTQLTWNIESIAHFECVVRSAFSQRRKMLRKSLAAYFEPKELMALDVDPTARAETIDGASFARLANALYLKEKNL</sequence>
<evidence type="ECO:0000255" key="1">
    <source>
        <dbReference type="HAMAP-Rule" id="MF_00607"/>
    </source>
</evidence>